<evidence type="ECO:0000255" key="1"/>
<evidence type="ECO:0000255" key="2">
    <source>
        <dbReference type="PROSITE-ProRule" id="PRU00258"/>
    </source>
</evidence>
<evidence type="ECO:0000255" key="3">
    <source>
        <dbReference type="PROSITE-ProRule" id="PRU01348"/>
    </source>
</evidence>
<evidence type="ECO:0000255" key="4">
    <source>
        <dbReference type="PROSITE-ProRule" id="PRU01363"/>
    </source>
</evidence>
<evidence type="ECO:0000256" key="5">
    <source>
        <dbReference type="SAM" id="MobiDB-lite"/>
    </source>
</evidence>
<evidence type="ECO:0000269" key="6">
    <source>
    </source>
</evidence>
<evidence type="ECO:0000303" key="7">
    <source>
    </source>
</evidence>
<evidence type="ECO:0000305" key="8"/>
<evidence type="ECO:0000305" key="9">
    <source>
    </source>
</evidence>
<name>PVHA_TALVA</name>
<reference key="1">
    <citation type="journal article" date="2019" name="J. Am. Chem. Soc.">
        <title>Genome-mined Diels-Alderase catalyzes formation of the cis-octahydrodecalins of varicidin A and B.</title>
        <authorList>
            <person name="Tan D."/>
            <person name="Jamieson C.S."/>
            <person name="Ohashi M."/>
            <person name="Tang M.C."/>
            <person name="Houk K.N."/>
            <person name="Tang Y."/>
        </authorList>
    </citation>
    <scope>NUCLEOTIDE SEQUENCE [GENOMIC DNA]</scope>
    <scope>FUNCTION</scope>
    <scope>CATALYTIC ACTIVITY</scope>
    <scope>DOMAIN</scope>
    <scope>PATHWAY</scope>
    <source>
        <strain>HXQ-H-1</strain>
    </source>
</reference>
<proteinExistence type="evidence at protein level"/>
<dbReference type="EC" id="2.3.1.-" evidence="6"/>
<dbReference type="EC" id="6.3.2.-" evidence="6"/>
<dbReference type="EMBL" id="MK376933">
    <property type="protein sequence ID" value="AZZ09613.1"/>
    <property type="molecule type" value="Genomic_DNA"/>
</dbReference>
<dbReference type="SMR" id="A0A3T0QHT6"/>
<dbReference type="GO" id="GO:0004315">
    <property type="term" value="F:3-oxoacyl-[acyl-carrier-protein] synthase activity"/>
    <property type="evidence" value="ECO:0007669"/>
    <property type="project" value="InterPro"/>
</dbReference>
<dbReference type="GO" id="GO:0004312">
    <property type="term" value="F:fatty acid synthase activity"/>
    <property type="evidence" value="ECO:0007669"/>
    <property type="project" value="TreeGrafter"/>
</dbReference>
<dbReference type="GO" id="GO:0016874">
    <property type="term" value="F:ligase activity"/>
    <property type="evidence" value="ECO:0007669"/>
    <property type="project" value="UniProtKB-KW"/>
</dbReference>
<dbReference type="GO" id="GO:0008168">
    <property type="term" value="F:methyltransferase activity"/>
    <property type="evidence" value="ECO:0007669"/>
    <property type="project" value="UniProtKB-KW"/>
</dbReference>
<dbReference type="GO" id="GO:0016491">
    <property type="term" value="F:oxidoreductase activity"/>
    <property type="evidence" value="ECO:0007669"/>
    <property type="project" value="UniProtKB-KW"/>
</dbReference>
<dbReference type="GO" id="GO:0031177">
    <property type="term" value="F:phosphopantetheine binding"/>
    <property type="evidence" value="ECO:0007669"/>
    <property type="project" value="InterPro"/>
</dbReference>
<dbReference type="GO" id="GO:0006633">
    <property type="term" value="P:fatty acid biosynthetic process"/>
    <property type="evidence" value="ECO:0007669"/>
    <property type="project" value="InterPro"/>
</dbReference>
<dbReference type="GO" id="GO:0032259">
    <property type="term" value="P:methylation"/>
    <property type="evidence" value="ECO:0007669"/>
    <property type="project" value="UniProtKB-KW"/>
</dbReference>
<dbReference type="GO" id="GO:0009403">
    <property type="term" value="P:toxin biosynthetic process"/>
    <property type="evidence" value="ECO:0007669"/>
    <property type="project" value="UniProtKB-ARBA"/>
</dbReference>
<dbReference type="CDD" id="cd05930">
    <property type="entry name" value="A_NRPS"/>
    <property type="match status" value="1"/>
</dbReference>
<dbReference type="CDD" id="cd02440">
    <property type="entry name" value="AdoMet_MTases"/>
    <property type="match status" value="1"/>
</dbReference>
<dbReference type="CDD" id="cd19532">
    <property type="entry name" value="C_PKS-NRPS"/>
    <property type="match status" value="1"/>
</dbReference>
<dbReference type="CDD" id="cd00833">
    <property type="entry name" value="PKS"/>
    <property type="match status" value="1"/>
</dbReference>
<dbReference type="FunFam" id="3.40.47.10:FF:000019">
    <property type="entry name" value="Polyketide synthase type I"/>
    <property type="match status" value="1"/>
</dbReference>
<dbReference type="Gene3D" id="3.30.300.30">
    <property type="match status" value="1"/>
</dbReference>
<dbReference type="Gene3D" id="3.30.70.3290">
    <property type="match status" value="1"/>
</dbReference>
<dbReference type="Gene3D" id="3.40.47.10">
    <property type="match status" value="1"/>
</dbReference>
<dbReference type="Gene3D" id="1.10.1200.10">
    <property type="entry name" value="ACP-like"/>
    <property type="match status" value="2"/>
</dbReference>
<dbReference type="Gene3D" id="3.30.559.10">
    <property type="entry name" value="Chloramphenicol acetyltransferase-like domain"/>
    <property type="match status" value="1"/>
</dbReference>
<dbReference type="Gene3D" id="3.40.366.10">
    <property type="entry name" value="Malonyl-Coenzyme A Acyl Carrier Protein, domain 2"/>
    <property type="match status" value="1"/>
</dbReference>
<dbReference type="Gene3D" id="3.40.50.12780">
    <property type="entry name" value="N-terminal domain of ligase-like"/>
    <property type="match status" value="1"/>
</dbReference>
<dbReference type="Gene3D" id="3.40.50.720">
    <property type="entry name" value="NAD(P)-binding Rossmann-like Domain"/>
    <property type="match status" value="2"/>
</dbReference>
<dbReference type="Gene3D" id="3.30.559.30">
    <property type="entry name" value="Nonribosomal peptide synthetase, condensation domain"/>
    <property type="match status" value="1"/>
</dbReference>
<dbReference type="Gene3D" id="3.10.129.110">
    <property type="entry name" value="Polyketide synthase dehydratase"/>
    <property type="match status" value="1"/>
</dbReference>
<dbReference type="Gene3D" id="3.40.50.150">
    <property type="entry name" value="Vaccinia Virus protein VP39"/>
    <property type="match status" value="1"/>
</dbReference>
<dbReference type="InterPro" id="IPR001227">
    <property type="entry name" value="Ac_transferase_dom_sf"/>
</dbReference>
<dbReference type="InterPro" id="IPR036736">
    <property type="entry name" value="ACP-like_sf"/>
</dbReference>
<dbReference type="InterPro" id="IPR014043">
    <property type="entry name" value="Acyl_transferase_dom"/>
</dbReference>
<dbReference type="InterPro" id="IPR016035">
    <property type="entry name" value="Acyl_Trfase/lysoPLipase"/>
</dbReference>
<dbReference type="InterPro" id="IPR045851">
    <property type="entry name" value="AMP-bd_C_sf"/>
</dbReference>
<dbReference type="InterPro" id="IPR020845">
    <property type="entry name" value="AMP-binding_CS"/>
</dbReference>
<dbReference type="InterPro" id="IPR000873">
    <property type="entry name" value="AMP-dep_synth/lig_dom"/>
</dbReference>
<dbReference type="InterPro" id="IPR042099">
    <property type="entry name" value="ANL_N_sf"/>
</dbReference>
<dbReference type="InterPro" id="IPR023213">
    <property type="entry name" value="CAT-like_dom_sf"/>
</dbReference>
<dbReference type="InterPro" id="IPR001242">
    <property type="entry name" value="Condensatn"/>
</dbReference>
<dbReference type="InterPro" id="IPR013120">
    <property type="entry name" value="Far_NAD-bd"/>
</dbReference>
<dbReference type="InterPro" id="IPR018201">
    <property type="entry name" value="Ketoacyl_synth_AS"/>
</dbReference>
<dbReference type="InterPro" id="IPR014031">
    <property type="entry name" value="Ketoacyl_synth_C"/>
</dbReference>
<dbReference type="InterPro" id="IPR014030">
    <property type="entry name" value="Ketoacyl_synth_N"/>
</dbReference>
<dbReference type="InterPro" id="IPR016036">
    <property type="entry name" value="Malonyl_transacylase_ACP-bd"/>
</dbReference>
<dbReference type="InterPro" id="IPR013217">
    <property type="entry name" value="Methyltransf_12"/>
</dbReference>
<dbReference type="InterPro" id="IPR036291">
    <property type="entry name" value="NAD(P)-bd_dom_sf"/>
</dbReference>
<dbReference type="InterPro" id="IPR032821">
    <property type="entry name" value="PKS_assoc"/>
</dbReference>
<dbReference type="InterPro" id="IPR020841">
    <property type="entry name" value="PKS_Beta-ketoAc_synthase_dom"/>
</dbReference>
<dbReference type="InterPro" id="IPR042104">
    <property type="entry name" value="PKS_dehydratase_sf"/>
</dbReference>
<dbReference type="InterPro" id="IPR020807">
    <property type="entry name" value="PKS_DH"/>
</dbReference>
<dbReference type="InterPro" id="IPR049551">
    <property type="entry name" value="PKS_DH_C"/>
</dbReference>
<dbReference type="InterPro" id="IPR049552">
    <property type="entry name" value="PKS_DH_N"/>
</dbReference>
<dbReference type="InterPro" id="IPR013968">
    <property type="entry name" value="PKS_KR"/>
</dbReference>
<dbReference type="InterPro" id="IPR049900">
    <property type="entry name" value="PKS_mFAS_DH"/>
</dbReference>
<dbReference type="InterPro" id="IPR050091">
    <property type="entry name" value="PKS_NRPS_Biosynth_Enz"/>
</dbReference>
<dbReference type="InterPro" id="IPR020806">
    <property type="entry name" value="PKS_PP-bd"/>
</dbReference>
<dbReference type="InterPro" id="IPR009081">
    <property type="entry name" value="PP-bd_ACP"/>
</dbReference>
<dbReference type="InterPro" id="IPR029063">
    <property type="entry name" value="SAM-dependent_MTases_sf"/>
</dbReference>
<dbReference type="InterPro" id="IPR016039">
    <property type="entry name" value="Thiolase-like"/>
</dbReference>
<dbReference type="PANTHER" id="PTHR43775">
    <property type="entry name" value="FATTY ACID SYNTHASE"/>
    <property type="match status" value="1"/>
</dbReference>
<dbReference type="PANTHER" id="PTHR43775:SF20">
    <property type="entry name" value="HYBRID PKS-NRPS SYNTHETASE APDA"/>
    <property type="match status" value="1"/>
</dbReference>
<dbReference type="Pfam" id="PF23297">
    <property type="entry name" value="ACP_SdgA_C"/>
    <property type="match status" value="1"/>
</dbReference>
<dbReference type="Pfam" id="PF00698">
    <property type="entry name" value="Acyl_transf_1"/>
    <property type="match status" value="1"/>
</dbReference>
<dbReference type="Pfam" id="PF00501">
    <property type="entry name" value="AMP-binding"/>
    <property type="match status" value="1"/>
</dbReference>
<dbReference type="Pfam" id="PF00668">
    <property type="entry name" value="Condensation"/>
    <property type="match status" value="1"/>
</dbReference>
<dbReference type="Pfam" id="PF16197">
    <property type="entry name" value="KAsynt_C_assoc"/>
    <property type="match status" value="1"/>
</dbReference>
<dbReference type="Pfam" id="PF00109">
    <property type="entry name" value="ketoacyl-synt"/>
    <property type="match status" value="1"/>
</dbReference>
<dbReference type="Pfam" id="PF02801">
    <property type="entry name" value="Ketoacyl-synt_C"/>
    <property type="match status" value="1"/>
</dbReference>
<dbReference type="Pfam" id="PF08659">
    <property type="entry name" value="KR"/>
    <property type="match status" value="1"/>
</dbReference>
<dbReference type="Pfam" id="PF08242">
    <property type="entry name" value="Methyltransf_12"/>
    <property type="match status" value="1"/>
</dbReference>
<dbReference type="Pfam" id="PF07993">
    <property type="entry name" value="NAD_binding_4"/>
    <property type="match status" value="1"/>
</dbReference>
<dbReference type="Pfam" id="PF21089">
    <property type="entry name" value="PKS_DH_N"/>
    <property type="match status" value="1"/>
</dbReference>
<dbReference type="Pfam" id="PF00550">
    <property type="entry name" value="PP-binding"/>
    <property type="match status" value="1"/>
</dbReference>
<dbReference type="Pfam" id="PF14765">
    <property type="entry name" value="PS-DH"/>
    <property type="match status" value="1"/>
</dbReference>
<dbReference type="SMART" id="SM00827">
    <property type="entry name" value="PKS_AT"/>
    <property type="match status" value="1"/>
</dbReference>
<dbReference type="SMART" id="SM00826">
    <property type="entry name" value="PKS_DH"/>
    <property type="match status" value="1"/>
</dbReference>
<dbReference type="SMART" id="SM00822">
    <property type="entry name" value="PKS_KR"/>
    <property type="match status" value="1"/>
</dbReference>
<dbReference type="SMART" id="SM00825">
    <property type="entry name" value="PKS_KS"/>
    <property type="match status" value="1"/>
</dbReference>
<dbReference type="SMART" id="SM00823">
    <property type="entry name" value="PKS_PP"/>
    <property type="match status" value="2"/>
</dbReference>
<dbReference type="SUPFAM" id="SSF56801">
    <property type="entry name" value="Acetyl-CoA synthetase-like"/>
    <property type="match status" value="1"/>
</dbReference>
<dbReference type="SUPFAM" id="SSF47336">
    <property type="entry name" value="ACP-like"/>
    <property type="match status" value="2"/>
</dbReference>
<dbReference type="SUPFAM" id="SSF52777">
    <property type="entry name" value="CoA-dependent acyltransferases"/>
    <property type="match status" value="2"/>
</dbReference>
<dbReference type="SUPFAM" id="SSF52151">
    <property type="entry name" value="FabD/lysophospholipase-like"/>
    <property type="match status" value="1"/>
</dbReference>
<dbReference type="SUPFAM" id="SSF51735">
    <property type="entry name" value="NAD(P)-binding Rossmann-fold domains"/>
    <property type="match status" value="2"/>
</dbReference>
<dbReference type="SUPFAM" id="SSF55048">
    <property type="entry name" value="Probable ACP-binding domain of malonyl-CoA ACP transacylase"/>
    <property type="match status" value="1"/>
</dbReference>
<dbReference type="SUPFAM" id="SSF53335">
    <property type="entry name" value="S-adenosyl-L-methionine-dependent methyltransferases"/>
    <property type="match status" value="1"/>
</dbReference>
<dbReference type="SUPFAM" id="SSF53901">
    <property type="entry name" value="Thiolase-like"/>
    <property type="match status" value="1"/>
</dbReference>
<dbReference type="PROSITE" id="PS00455">
    <property type="entry name" value="AMP_BINDING"/>
    <property type="match status" value="1"/>
</dbReference>
<dbReference type="PROSITE" id="PS50075">
    <property type="entry name" value="CARRIER"/>
    <property type="match status" value="2"/>
</dbReference>
<dbReference type="PROSITE" id="PS00606">
    <property type="entry name" value="KS3_1"/>
    <property type="match status" value="1"/>
</dbReference>
<dbReference type="PROSITE" id="PS52004">
    <property type="entry name" value="KS3_2"/>
    <property type="match status" value="1"/>
</dbReference>
<dbReference type="PROSITE" id="PS52019">
    <property type="entry name" value="PKS_MFAS_DH"/>
    <property type="match status" value="1"/>
</dbReference>
<gene>
    <name evidence="7" type="primary">pvhA</name>
</gene>
<keyword id="KW-0436">Ligase</keyword>
<keyword id="KW-0489">Methyltransferase</keyword>
<keyword id="KW-0511">Multifunctional enzyme</keyword>
<keyword id="KW-0560">Oxidoreductase</keyword>
<keyword id="KW-0596">Phosphopantetheine</keyword>
<keyword id="KW-0597">Phosphoprotein</keyword>
<keyword id="KW-0677">Repeat</keyword>
<keyword id="KW-0808">Transferase</keyword>
<sequence>MSHSDQDERIAVIGTGCRFPGGCDSPSKLWDLLKAPRDVLREIPRERFDANAWYHPDNKHHGTSNVRSAYLLDQDPAAFDNEFFNIQSSEAEAVDPQQRILLETVYDSLCEAGCTIEGLRGSNTAVYVGLMCDDWSAIVTKDTEVFPQYAATGTSRSVMSNRVSYFFDWHGPSMTIDTACSSSLVAVHQAIHTLRSGESNVAIAAGANLILSPDMFIAESNLSMLSAGGRSRMWDRDVDGYARGEGIAAVVLKRLSDAVRDNDQIECVIRATSVNQDGKTAGLTMPSGTAQAALIRSTYARAGLDISNPRDRPQFFHAHGTGTAAGDPQEARAIHEAFYSGTARNTDKLYVGSVKTVIGHTEGTAGLASLISTSLAMRHKIIPPNMHFNNLNPRLKPYYRNLEVPTKAYPWPEPAPGHPRRASVNSFGFGGTNAHAIIEEYLPSQTRDLAEHTTAVSLLTPLVFSASSEISLRSLLASYSAYLKENLTISLQSLAYTLQARRSTMPHRVAITCNTTSELISAIDGIISGQENSTIAVRHLSKPTPKVLAVFTGQGAQWARMGAKLVETSPFVSKRLKELDEALATSAAGNSPQWTLSEMILAGPALSRVAEAAISQPLCTAVQIVLVDLLRQAGVRIDAVVGHSSGEIGAAYASGLYTARDAIRAAYYRGLYSSLAKSPNGGKGSMMAVSTTHQDAIEFCELETFEGRLQVAAVNSFDSITLSGDADAVAEACEVYQDEGAFARQLKVDTAYHSSHVLPCSKPYLEAMTSAGREALPKAPSDALPWPTWYSSVRDGQEMTREDVQPQYWVDNMANPVLFSTAVEAACSDKGLFDLIIEVGPHPALQKPCLDTVEETAGARPPYVGLLGRGKDDVSAFSKALGFIWTQLGPQSVAFDNVERAASEPPVVPRELLKDLPQYPFDHSSKFLSLSRVSGFYNRSQMATHPLLGKRCYDRETNLCIQWRNILSLKEVPWLTGHQIQGLTVFPAAGFVSMAIEAIVALAKDSTIGLLSLENVNIGRAMAFQDDSSRVEVLFDMRIIAQTPHEIAAEWASYSGDPHDIKTVLTLNASGVVRATLAENNASAEPDVLPALDVIDNNDLSPVDTERFYKFLRKLGYNYSWPFYGTKSIQRKAGFSTGMLEDQSGDEWQDQLLVHPGMIDTALQTAFAAFCCPGDERLWSLHVPTRFKSLVINPFFTARGIGKQRMLKFVSTAAAVKQGKIAAELYLQSEHEGQTHTFLQAEGLEIVPLAAAVPDNDTVLFSRFDYKLACADGETAAILDTPLSQDAIDDVINAERVAFYHLYNVVKSITPGEEASALPHYQQFLSWARNVVENVLRGDNKYVPASAAQDSASDIASLLTGLPFRFDKNGEVSLAEAIGKNLISAIRTSSTVFQAEDRNLPAELYEKAIGFDTGNQCLANMIASISHRYPRMNILEVGSQVGSSTEAILSQLDTAFDTYTYTNISDDSFGLAEEHFTAYGDRINFKTLDITQSPTSQGFALGEYDLVVASNVISSGSDMTESLTNLRALLKPGGFAVILEPVDNDCLRLGLALGCMPDRSPPLGLPQWNSLLSETGFSGTDTISPRSHGAVPGVVFCTQAIDDRIKMLRSPLSNISCLPGLEAPELAIVGRGQSSELQNLCGELSDLLSSAFPKVTFVDSVEQVTAETIPTTSAVIMLAELGESPWASLNPVKLEGIKNIYRQARNLLWVTSGADSKDPYSNISLGIGRAMQFEYPHLSIQALDVDTISENTAKIIAEHLLRLGTLSTWKEDPEQPTMLWSMEPEVWIKNDMPIIPRLCPYTPGNDRYNTTRRTVRNQVIPRDTHLALTNDNGAWEVQVTSPLHQAPKIPYATDTKQVRVTDVLLSTLGIIPGTMLMLCTGQDTSTGEALLALSPIAETLVQVPRSWTTGIDNAEPRDALGAVAANIVAKLMAKSAFRGDVLIVHDPHPAVAHELAIIANKGAFTIHFTTASAQVSIEQGWHHIGSRFSASKVKSLLPINANKLLDLSKSSADGISAHILSSLPRGCRVVDMSHIMGNTTELQSWVSEDEVATVLQESVTEVLRSDRYTNLVNNVPLVSLESISEPTHHASFAIADCSVPAVTARVRAVDDGIIFRGDNTYLLVGLTGEIGRSLCKWMAERGARHIVLTSRTPKEDVVFSSAMKALGAVVKYLPMDVRSRDSIHACYAMIQNTMPPVAGVANGAMIIHDMVFDNMSFEVMDKVLAPKVVGSQLLDELFYDTPLDFFIFFSSMTAVMGNSGQANYLAGNMYMNALAAQRKERGVAGSSINISSVIGVGYVERSDQLDEEYFLNMGYRPMSEQDLQVSFAEAIVLGKPGSSEIAELSTGINSTLNGQSIGKWLQDIKFSHMMMHESNDNAGMGPGASAAPLKVQLSEAKSKEDIISIIKEVFLARLRRILSIPADKNINEDVTLVEQGVDSLMAVEVRSFFNKELDVDIPVLKILGDISINGIIKQVVELLPAAVYDLPEETPQTLSKNPAPTPVKAPVSAPSTPAAASQPVLTDSTASSSRDSDDDQASSNSTSYETSKDASREDSEVDETPLESPVNTPNVMSKPSASSQLLEKKQLLEVDALIASSRPETLAPMSHGQEGFWFLQDYLPDKTVFNTSVMLKLEGEISVETLSQALQMVARRHEILRTRFFSADDDGEQKVMQAIAANSSLELETKQITSGNEAQVEFTRFNKHVFDLANGEAARVLLLSLSKTEHFLMAGMHHIYLDGYSFSIFFNDLNTAYTSKRLPPLPSNSQYRSFVEQERERYESGEFDETIAHYRETLPKDLAPIELLPFARGTTRREVNNYDQTESKMRIDRPLADKIRQLARNNRSTSFHVFLAAFQALLFQLLPESDDLIIGMGDANRDDKKYLNSIGYFFNLLPLHFSRFKSGTKIADLVQDSRSAVREALERPHVPLSILLDELDVPRSNKHTPLFQVCIDHRQVLQEQSNWGGCRVSDEQWHDAGTGFDISLQITEFNTDASLSLRLQKPMYTEEHTNMLLRSFVAVLEHMADVPTDNMVEDIPSWSELDIQKALTVGKGREFHSRWDSNPPTVMHRIHEMITVHGSTTALKDGHGSTLSYEQMGRRIAAISAALIEKGIARGDVIGVFQEPSVDWICSMMAIFNIGATYMALDQRLTLPRLATIVQTAKPAAILTDSFTSSQVTDIGASAITTVLVSHLASSVNTKPINAARAEDVAVVLFTSGSTGVPKGMRMTHANLVFSTDSISGAFNVTQESMVLQQSPFSFDPSLCQTLVALTNGAALYVVPSRSRGDPMAVTKIMAEEKVTFTVGTPSEYAMLLEYGADNIRQCHAWKCAAWGGEQMPHGLAKQLAAANLPGLKAHNVYGPSETTMLSHFHLVNPAEIEGNGYIPVGAGFDGYKYCIVDHQMRVQPIGVPGEIIIGGPAVVAGYLNNQQLTDTKFLADSFFGTNGKVYRSGDLGRMLEDGTLVVEGRLDGDDLIKLRGFRIELEEIEKAIVKQADGTLGDAIVSLRGEGDAQFLAAHVTLSADLSPPAKQKLISALQRLPLSSYMIPSVFGVIKAIPKTAHDKVDRKAAKELPLPSADDENSLAVHGIDGGDDSVLSGTERQLGTLWRQVIPVYVGSLASTSDFFLAGGNSLLLVKLQALLRTEFGATPKLMDLMGASNLAAMADAVQKEVDSSLTRDGIDWDLETRPPVALQHKLSGFISSARTNTTRPDASRFNVLLTGATGQLGRHVLSQLVTNGKTSRVICLTRQPDKIEANDKVTTLRGDVSEPNFGLSEQEYQQLATETDVIMHCVANRSFWDRYEVLQPVNVSAVKSLVGLIADSGRIIPLHFMSSGAVSHYYNLGTSPPRDGSDGYVASKWAAEGFLRRIAAETSIPIYIHRPSSVDGDALGSPQEREAVTDQLMGIVNSMEIQPEFGGVDGTLDIAPVDDMAQSLAELVLKSITEAAETDGSEKNLIQEFKHKAALQVYARDFAARLESEGQHAQFPKMPILEWFGQAKAAGFSYIIAAQELVMTSGLDAITTRR</sequence>
<feature type="chain" id="PRO_0000453333" description="Hybrid PKS-NRPS synthetase pvhA">
    <location>
        <begin position="1"/>
        <end position="4023"/>
    </location>
</feature>
<feature type="domain" description="Ketosynthase family 3 (KS3)" evidence="3">
    <location>
        <begin position="7"/>
        <end position="440"/>
    </location>
</feature>
<feature type="domain" description="PKS/mFAS DH" evidence="4">
    <location>
        <begin position="945"/>
        <end position="1255"/>
    </location>
</feature>
<feature type="domain" description="Carrier 1" evidence="2">
    <location>
        <begin position="2404"/>
        <end position="2479"/>
    </location>
</feature>
<feature type="domain" description="Carrier 2" evidence="2">
    <location>
        <begin position="3593"/>
        <end position="3670"/>
    </location>
</feature>
<feature type="region of interest" description="Malonyl-CoA:ACP transacylase (MAT) domain" evidence="1">
    <location>
        <begin position="550"/>
        <end position="871"/>
    </location>
</feature>
<feature type="region of interest" description="Dehydratase (DH) domain" evidence="1">
    <location>
        <begin position="945"/>
        <end position="1249"/>
    </location>
</feature>
<feature type="region of interest" description="N-terminal hotdog fold" evidence="4">
    <location>
        <begin position="945"/>
        <end position="1080"/>
    </location>
</feature>
<feature type="region of interest" description="C-terminal hotdog fold" evidence="4">
    <location>
        <begin position="1099"/>
        <end position="1255"/>
    </location>
</feature>
<feature type="region of interest" description="Methyltransferase (MT) domain" evidence="1">
    <location>
        <begin position="1402"/>
        <end position="1585"/>
    </location>
</feature>
<feature type="region of interest" description="Ketoreductase (KR) domain" evidence="1">
    <location>
        <begin position="2120"/>
        <end position="2291"/>
    </location>
</feature>
<feature type="region of interest" description="Disordered" evidence="5">
    <location>
        <begin position="2490"/>
        <end position="2580"/>
    </location>
</feature>
<feature type="region of interest" description="Condensation (C) domain" evidence="1">
    <location>
        <begin position="2604"/>
        <end position="3043"/>
    </location>
</feature>
<feature type="region of interest" description="Adenylation (A) (KR) domain" evidence="1">
    <location>
        <begin position="3072"/>
        <end position="3467"/>
    </location>
</feature>
<feature type="region of interest" description="Reductase (RED) domain" evidence="1">
    <location>
        <begin position="3783"/>
        <end position="3932"/>
    </location>
</feature>
<feature type="compositionally biased region" description="Low complexity" evidence="5">
    <location>
        <begin position="2502"/>
        <end position="2529"/>
    </location>
</feature>
<feature type="compositionally biased region" description="Polar residues" evidence="5">
    <location>
        <begin position="2565"/>
        <end position="2580"/>
    </location>
</feature>
<feature type="active site" description="For beta-ketoacyl synthase activity" evidence="3">
    <location>
        <position position="180"/>
    </location>
</feature>
<feature type="active site" description="For beta-ketoacyl synthase activity" evidence="3">
    <location>
        <position position="319"/>
    </location>
</feature>
<feature type="active site" description="For beta-ketoacyl synthase activity" evidence="3">
    <location>
        <position position="360"/>
    </location>
</feature>
<feature type="active site" description="Proton acceptor; for dehydratase activity" evidence="4">
    <location>
        <position position="978"/>
    </location>
</feature>
<feature type="active site" description="Proton donor; for dehydratase activity" evidence="4">
    <location>
        <position position="1160"/>
    </location>
</feature>
<feature type="modified residue" description="O-(pantetheine 4'-phosphoryl)serine" evidence="2">
    <location>
        <position position="2439"/>
    </location>
</feature>
<feature type="modified residue" description="O-(pantetheine 4'-phosphoryl)serine" evidence="2">
    <location>
        <position position="3630"/>
    </location>
</feature>
<comment type="function">
    <text evidence="6">Hybrid PKS-NRPS synthetase; part of the gene cluster that mediates the biosynthesis of varicidin A, an antifungal natural product containing a cis-octahydrodecalin core (PubMed:30609896). The PKS module of pvhA together with the enoylreductase pvhC catalyze the formation of the polyketide unit which is then conjugated to L-isoleucine by the condensation domain of the NRPS module (PubMed:30609896). Activity of the Dieckmann cyclase domain (RED) of pvhA results in release of an acyclic tetramate (PubMed:30609896). The cytochrome P450 monooxygenase pvhE then catalyzes the oxidation of the C21 methyl group to a to carboxylate group (PubMed:30609896). The methyltransferase pvhD then further methylates the pvhE product (PubMed:30609896). The Diels-Alderase pvhB is able to catalyze Diels-Alder cycloaddition using both pvhE and pvhD products as substrates to form the decalin ring, yielding varicidin B and A, respectively (PubMed:30609896).</text>
</comment>
<comment type="pathway">
    <text evidence="6">Secondary metabolite biosynthesis.</text>
</comment>
<comment type="domain">
    <text evidence="9">NRP synthetases are composed of discrete domains (adenylation (A), thiolation (T) or peptidyl carrier protein (PCP) and condensation (C) domains) which when grouped together are referred to as a single module. Each module is responsible for the recognition (via the A domain) and incorporation of a single amino acid into the growing peptide product. Thus, an NRP synthetase is generally composed of one or more modules and can terminate in a thioesterase domain (TE) that releases the newly synthesized peptide from the enzyme. Occasionally, epimerase (E) domains (responsible for L- to D- amino acid conversion) are present within the NRP synthetase. CcsA also contains a polyketide synthase module (PKS) consisting of several catalytic domains including a ketoacyl synthase domain (KS), an acyl transferase domain (AT), a dehydratase domain (DH), a methyltransferase domain (MT), and a ketoreductase domain (KR). Instead of a thioesterase domain (TE), pvhA finishes with a reductase-like domain (R) for peptide release. PvhA has the following architecture: KS-MAT-DH-MT-KR-PCP-C-A-T-R.</text>
</comment>
<comment type="similarity">
    <text evidence="8">In the C-terminal section; belongs to the NRP synthetase family.</text>
</comment>
<accession>A0A3T0QHT6</accession>
<protein>
    <recommendedName>
        <fullName evidence="7">Hybrid PKS-NRPS synthetase pvhA</fullName>
        <shortName evidence="7">PKS-NRPS pvhA</shortName>
        <ecNumber evidence="6">2.3.1.-</ecNumber>
        <ecNumber evidence="6">6.3.2.-</ecNumber>
    </recommendedName>
    <alternativeName>
        <fullName evidence="7">Varicidin biosynthesis cluster protein A</fullName>
    </alternativeName>
</protein>
<organism>
    <name type="scientific">Talaromyces variabilis</name>
    <name type="common">Penicillium variabile</name>
    <dbReference type="NCBI Taxonomy" id="28576"/>
    <lineage>
        <taxon>Eukaryota</taxon>
        <taxon>Fungi</taxon>
        <taxon>Dikarya</taxon>
        <taxon>Ascomycota</taxon>
        <taxon>Pezizomycotina</taxon>
        <taxon>Eurotiomycetes</taxon>
        <taxon>Eurotiomycetidae</taxon>
        <taxon>Eurotiales</taxon>
        <taxon>Trichocomaceae</taxon>
        <taxon>Talaromyces</taxon>
    </lineage>
</organism>